<name>MURB1_CORGL</name>
<feature type="chain" id="PRO_0000179203" description="UDP-N-acetylenolpyruvoylglucosamine reductase 1">
    <location>
        <begin position="1"/>
        <end position="335"/>
    </location>
</feature>
<feature type="domain" description="FAD-binding PCMH-type">
    <location>
        <begin position="36"/>
        <end position="202"/>
    </location>
</feature>
<feature type="active site" evidence="1">
    <location>
        <position position="181"/>
    </location>
</feature>
<feature type="active site" description="Proton donor" evidence="1">
    <location>
        <position position="231"/>
    </location>
</feature>
<feature type="active site" evidence="1">
    <location>
        <position position="306"/>
    </location>
</feature>
<accession>Q8NTF4</accession>
<comment type="function">
    <text evidence="1">Cell wall formation.</text>
</comment>
<comment type="catalytic activity">
    <reaction>
        <text>UDP-N-acetyl-alpha-D-muramate + NADP(+) = UDP-N-acetyl-3-O-(1-carboxyvinyl)-alpha-D-glucosamine + NADPH + H(+)</text>
        <dbReference type="Rhea" id="RHEA:12248"/>
        <dbReference type="ChEBI" id="CHEBI:15378"/>
        <dbReference type="ChEBI" id="CHEBI:57783"/>
        <dbReference type="ChEBI" id="CHEBI:58349"/>
        <dbReference type="ChEBI" id="CHEBI:68483"/>
        <dbReference type="ChEBI" id="CHEBI:70757"/>
        <dbReference type="EC" id="1.3.1.98"/>
    </reaction>
</comment>
<comment type="cofactor">
    <cofactor evidence="1">
        <name>FAD</name>
        <dbReference type="ChEBI" id="CHEBI:57692"/>
    </cofactor>
</comment>
<comment type="pathway">
    <text>Cell wall biogenesis; peptidoglycan biosynthesis.</text>
</comment>
<comment type="subcellular location">
    <subcellularLocation>
        <location evidence="1">Cytoplasm</location>
    </subcellularLocation>
</comment>
<comment type="similarity">
    <text evidence="2">Belongs to the MurB family.</text>
</comment>
<evidence type="ECO:0000250" key="1"/>
<evidence type="ECO:0000305" key="2"/>
<protein>
    <recommendedName>
        <fullName>UDP-N-acetylenolpyruvoylglucosamine reductase 1</fullName>
        <ecNumber>1.3.1.98</ecNumber>
    </recommendedName>
    <alternativeName>
        <fullName>UDP-N-acetylmuramate dehydrogenase 1</fullName>
    </alternativeName>
</protein>
<organism>
    <name type="scientific">Corynebacterium glutamicum (strain ATCC 13032 / DSM 20300 / JCM 1318 / BCRC 11384 / CCUG 27702 / LMG 3730 / NBRC 12168 / NCIMB 10025 / NRRL B-2784 / 534)</name>
    <dbReference type="NCBI Taxonomy" id="196627"/>
    <lineage>
        <taxon>Bacteria</taxon>
        <taxon>Bacillati</taxon>
        <taxon>Actinomycetota</taxon>
        <taxon>Actinomycetes</taxon>
        <taxon>Mycobacteriales</taxon>
        <taxon>Corynebacteriaceae</taxon>
        <taxon>Corynebacterium</taxon>
    </lineage>
</organism>
<gene>
    <name type="primary">murB1</name>
    <name type="synonym">murB</name>
    <name type="ordered locus">Cgl0353</name>
    <name type="ordered locus">cg0423</name>
</gene>
<reference key="1">
    <citation type="journal article" date="2003" name="Appl. Microbiol. Biotechnol.">
        <title>The Corynebacterium glutamicum genome: features and impacts on biotechnological processes.</title>
        <authorList>
            <person name="Ikeda M."/>
            <person name="Nakagawa S."/>
        </authorList>
    </citation>
    <scope>NUCLEOTIDE SEQUENCE [LARGE SCALE GENOMIC DNA]</scope>
    <source>
        <strain>ATCC 13032 / DSM 20300 / JCM 1318 / BCRC 11384 / CCUG 27702 / LMG 3730 / NBRC 12168 / NCIMB 10025 / NRRL B-2784 / 534</strain>
    </source>
</reference>
<reference key="2">
    <citation type="journal article" date="2003" name="J. Biotechnol.">
        <title>The complete Corynebacterium glutamicum ATCC 13032 genome sequence and its impact on the production of L-aspartate-derived amino acids and vitamins.</title>
        <authorList>
            <person name="Kalinowski J."/>
            <person name="Bathe B."/>
            <person name="Bartels D."/>
            <person name="Bischoff N."/>
            <person name="Bott M."/>
            <person name="Burkovski A."/>
            <person name="Dusch N."/>
            <person name="Eggeling L."/>
            <person name="Eikmanns B.J."/>
            <person name="Gaigalat L."/>
            <person name="Goesmann A."/>
            <person name="Hartmann M."/>
            <person name="Huthmacher K."/>
            <person name="Kraemer R."/>
            <person name="Linke B."/>
            <person name="McHardy A.C."/>
            <person name="Meyer F."/>
            <person name="Moeckel B."/>
            <person name="Pfefferle W."/>
            <person name="Puehler A."/>
            <person name="Rey D.A."/>
            <person name="Rueckert C."/>
            <person name="Rupp O."/>
            <person name="Sahm H."/>
            <person name="Wendisch V.F."/>
            <person name="Wiegraebe I."/>
            <person name="Tauch A."/>
        </authorList>
    </citation>
    <scope>NUCLEOTIDE SEQUENCE [LARGE SCALE GENOMIC DNA]</scope>
    <source>
        <strain>ATCC 13032 / DSM 20300 / JCM 1318 / BCRC 11384 / CCUG 27702 / LMG 3730 / NBRC 12168 / NCIMB 10025 / NRRL B-2784 / 534</strain>
    </source>
</reference>
<keyword id="KW-0131">Cell cycle</keyword>
<keyword id="KW-0132">Cell division</keyword>
<keyword id="KW-0133">Cell shape</keyword>
<keyword id="KW-0961">Cell wall biogenesis/degradation</keyword>
<keyword id="KW-0963">Cytoplasm</keyword>
<keyword id="KW-0274">FAD</keyword>
<keyword id="KW-0285">Flavoprotein</keyword>
<keyword id="KW-0521">NADP</keyword>
<keyword id="KW-0560">Oxidoreductase</keyword>
<keyword id="KW-0573">Peptidoglycan synthesis</keyword>
<keyword id="KW-1185">Reference proteome</keyword>
<sequence length="335" mass="36371">MNDFKKVSESLETALRNEFDFRFATEVSLKEISRWRIGGPAAVFAEPSSINEICALLAFMKNRPEPVVVVGGTSNILFDSDGFGGLVIKLGENFSNFIIEGSRIRAQAGASVPQLVRAVATEGLEGIVHAGGIPGTVGGLVVMNGGTQRRGIGEHVTKVLVTDAEGSIRELNANELQFTYRNSVLKNSETTVLEVELLLKPGNAGELLAELETILDQRSQKFPEDLPNCGSTFLSDPAMYSIVGPPGKAIEDAGLKGLRRGSAEISMQHANFIVNHGDASDDDILWLISAVRKEVYSRTGFVMDCEVLYLSYSGDFRPAHEVADEQWPDIDLVRN</sequence>
<proteinExistence type="inferred from homology"/>
<dbReference type="EC" id="1.3.1.98"/>
<dbReference type="EMBL" id="BA000036">
    <property type="protein sequence ID" value="BAB97746.1"/>
    <property type="molecule type" value="Genomic_DNA"/>
</dbReference>
<dbReference type="EMBL" id="BX927149">
    <property type="protein sequence ID" value="CAF19067.1"/>
    <property type="molecule type" value="Genomic_DNA"/>
</dbReference>
<dbReference type="RefSeq" id="NP_599604.1">
    <property type="nucleotide sequence ID" value="NC_003450.3"/>
</dbReference>
<dbReference type="RefSeq" id="WP_011013593.1">
    <property type="nucleotide sequence ID" value="NC_006958.1"/>
</dbReference>
<dbReference type="SMR" id="Q8NTF4"/>
<dbReference type="STRING" id="196627.cg0423"/>
<dbReference type="GeneID" id="1021403"/>
<dbReference type="KEGG" id="cgb:cg0423"/>
<dbReference type="KEGG" id="cgl:Cgl0353"/>
<dbReference type="PATRIC" id="fig|196627.13.peg.356"/>
<dbReference type="eggNOG" id="COG0812">
    <property type="taxonomic scope" value="Bacteria"/>
</dbReference>
<dbReference type="HOGENOM" id="CLU_035304_1_1_11"/>
<dbReference type="OrthoDB" id="9804753at2"/>
<dbReference type="BioCyc" id="CORYNE:G18NG-9910-MONOMER"/>
<dbReference type="UniPathway" id="UPA00219"/>
<dbReference type="Proteomes" id="UP000000582">
    <property type="component" value="Chromosome"/>
</dbReference>
<dbReference type="Proteomes" id="UP000001009">
    <property type="component" value="Chromosome"/>
</dbReference>
<dbReference type="GO" id="GO:0005829">
    <property type="term" value="C:cytosol"/>
    <property type="evidence" value="ECO:0007669"/>
    <property type="project" value="TreeGrafter"/>
</dbReference>
<dbReference type="GO" id="GO:0071949">
    <property type="term" value="F:FAD binding"/>
    <property type="evidence" value="ECO:0007669"/>
    <property type="project" value="InterPro"/>
</dbReference>
<dbReference type="GO" id="GO:0008762">
    <property type="term" value="F:UDP-N-acetylmuramate dehydrogenase activity"/>
    <property type="evidence" value="ECO:0007669"/>
    <property type="project" value="UniProtKB-UniRule"/>
</dbReference>
<dbReference type="GO" id="GO:0051301">
    <property type="term" value="P:cell division"/>
    <property type="evidence" value="ECO:0007669"/>
    <property type="project" value="UniProtKB-KW"/>
</dbReference>
<dbReference type="GO" id="GO:0071555">
    <property type="term" value="P:cell wall organization"/>
    <property type="evidence" value="ECO:0007669"/>
    <property type="project" value="UniProtKB-KW"/>
</dbReference>
<dbReference type="GO" id="GO:0009252">
    <property type="term" value="P:peptidoglycan biosynthetic process"/>
    <property type="evidence" value="ECO:0007669"/>
    <property type="project" value="UniProtKB-UniRule"/>
</dbReference>
<dbReference type="GO" id="GO:0008360">
    <property type="term" value="P:regulation of cell shape"/>
    <property type="evidence" value="ECO:0007669"/>
    <property type="project" value="UniProtKB-KW"/>
</dbReference>
<dbReference type="Gene3D" id="3.30.465.10">
    <property type="match status" value="1"/>
</dbReference>
<dbReference type="Gene3D" id="3.90.78.10">
    <property type="entry name" value="UDP-N-acetylenolpyruvoylglucosamine reductase, C-terminal domain"/>
    <property type="match status" value="1"/>
</dbReference>
<dbReference type="Gene3D" id="3.30.43.10">
    <property type="entry name" value="Uridine Diphospho-n-acetylenolpyruvylglucosamine Reductase, domain 2"/>
    <property type="match status" value="1"/>
</dbReference>
<dbReference type="HAMAP" id="MF_00037">
    <property type="entry name" value="MurB"/>
    <property type="match status" value="1"/>
</dbReference>
<dbReference type="InterPro" id="IPR016166">
    <property type="entry name" value="FAD-bd_PCMH"/>
</dbReference>
<dbReference type="InterPro" id="IPR036318">
    <property type="entry name" value="FAD-bd_PCMH-like_sf"/>
</dbReference>
<dbReference type="InterPro" id="IPR016167">
    <property type="entry name" value="FAD-bd_PCMH_sub1"/>
</dbReference>
<dbReference type="InterPro" id="IPR016169">
    <property type="entry name" value="FAD-bd_PCMH_sub2"/>
</dbReference>
<dbReference type="InterPro" id="IPR003170">
    <property type="entry name" value="MurB"/>
</dbReference>
<dbReference type="InterPro" id="IPR011601">
    <property type="entry name" value="MurB_C"/>
</dbReference>
<dbReference type="InterPro" id="IPR036635">
    <property type="entry name" value="MurB_C_sf"/>
</dbReference>
<dbReference type="InterPro" id="IPR006094">
    <property type="entry name" value="Oxid_FAD_bind_N"/>
</dbReference>
<dbReference type="NCBIfam" id="TIGR00179">
    <property type="entry name" value="murB"/>
    <property type="match status" value="1"/>
</dbReference>
<dbReference type="NCBIfam" id="NF010480">
    <property type="entry name" value="PRK13905.1"/>
    <property type="match status" value="1"/>
</dbReference>
<dbReference type="PANTHER" id="PTHR21071">
    <property type="entry name" value="UDP-N-ACETYLENOLPYRUVOYLGLUCOSAMINE REDUCTASE"/>
    <property type="match status" value="1"/>
</dbReference>
<dbReference type="PANTHER" id="PTHR21071:SF4">
    <property type="entry name" value="UDP-N-ACETYLENOLPYRUVOYLGLUCOSAMINE REDUCTASE"/>
    <property type="match status" value="1"/>
</dbReference>
<dbReference type="Pfam" id="PF01565">
    <property type="entry name" value="FAD_binding_4"/>
    <property type="match status" value="1"/>
</dbReference>
<dbReference type="Pfam" id="PF02873">
    <property type="entry name" value="MurB_C"/>
    <property type="match status" value="1"/>
</dbReference>
<dbReference type="SUPFAM" id="SSF56176">
    <property type="entry name" value="FAD-binding/transporter-associated domain-like"/>
    <property type="match status" value="1"/>
</dbReference>
<dbReference type="SUPFAM" id="SSF56194">
    <property type="entry name" value="Uridine diphospho-N-Acetylenolpyruvylglucosamine reductase, MurB, C-terminal domain"/>
    <property type="match status" value="1"/>
</dbReference>
<dbReference type="PROSITE" id="PS51387">
    <property type="entry name" value="FAD_PCMH"/>
    <property type="match status" value="1"/>
</dbReference>